<keyword id="KW-0997">Cell inner membrane</keyword>
<keyword id="KW-1003">Cell membrane</keyword>
<keyword id="KW-0472">Membrane</keyword>
<keyword id="KW-0812">Transmembrane</keyword>
<keyword id="KW-1133">Transmembrane helix</keyword>
<keyword id="KW-0813">Transport</keyword>
<reference key="1">
    <citation type="submission" date="2006-09" db="EMBL/GenBank/DDBJ databases">
        <title>Complete sequence of chromosome 1 of Shewanella sp. ANA-3.</title>
        <authorList>
            <person name="Copeland A."/>
            <person name="Lucas S."/>
            <person name="Lapidus A."/>
            <person name="Barry K."/>
            <person name="Detter J.C."/>
            <person name="Glavina del Rio T."/>
            <person name="Hammon N."/>
            <person name="Israni S."/>
            <person name="Dalin E."/>
            <person name="Tice H."/>
            <person name="Pitluck S."/>
            <person name="Chertkov O."/>
            <person name="Brettin T."/>
            <person name="Bruce D."/>
            <person name="Han C."/>
            <person name="Tapia R."/>
            <person name="Gilna P."/>
            <person name="Schmutz J."/>
            <person name="Larimer F."/>
            <person name="Land M."/>
            <person name="Hauser L."/>
            <person name="Kyrpides N."/>
            <person name="Kim E."/>
            <person name="Newman D."/>
            <person name="Salticov C."/>
            <person name="Konstantinidis K."/>
            <person name="Klappenback J."/>
            <person name="Tiedje J."/>
            <person name="Richardson P."/>
        </authorList>
    </citation>
    <scope>NUCLEOTIDE SEQUENCE [LARGE SCALE GENOMIC DNA]</scope>
    <source>
        <strain>ANA-3</strain>
    </source>
</reference>
<sequence>MFRYLLCCFGLVLMYPTGIDMYLVGLPQIANQLGATEAQLHIAFSVYLAGMATTMLFAGSLADRIGRKPITLFSALLFALASYFAARSQSSDLFLVARFVQGVGAGCCYVVAFAILRDALDDKRRAKVLSMVNGVTCIIPVIAPVIGHLIMLRFPWPSLFYTMAVMGLLVFGLCLFVLRETYSKASFHSQTLPRVQTESFKQGFFISRVVITTLGVTTILSYVNVSPMLIMGQMGFDRGQYSNTMAMTALVSMLASFSTPFLLNQFKEKSLILFSQTLFAAAALVFILTQLGWLGQLFNLLGFGLVCSGFAIGFGVTMSQALSPFVARAGVASSLLGIAQVCTSALYIWVMGLLEVSAINILLAILAVGALISITLMLAVPKLSEMVANEQIPESA</sequence>
<proteinExistence type="inferred from homology"/>
<dbReference type="EMBL" id="CP000469">
    <property type="protein sequence ID" value="ABK49809.1"/>
    <property type="molecule type" value="Genomic_DNA"/>
</dbReference>
<dbReference type="RefSeq" id="WP_011718367.1">
    <property type="nucleotide sequence ID" value="NC_008577.1"/>
</dbReference>
<dbReference type="SMR" id="A0L190"/>
<dbReference type="STRING" id="94122.Shewana3_3587"/>
<dbReference type="TCDB" id="2.A.1.2.74">
    <property type="family name" value="the major facilitator superfamily (mfs)"/>
</dbReference>
<dbReference type="KEGG" id="shn:Shewana3_3587"/>
<dbReference type="eggNOG" id="COG2814">
    <property type="taxonomic scope" value="Bacteria"/>
</dbReference>
<dbReference type="HOGENOM" id="CLU_001265_47_1_6"/>
<dbReference type="OrthoDB" id="9814303at2"/>
<dbReference type="Proteomes" id="UP000002589">
    <property type="component" value="Chromosome"/>
</dbReference>
<dbReference type="GO" id="GO:0005886">
    <property type="term" value="C:plasma membrane"/>
    <property type="evidence" value="ECO:0007669"/>
    <property type="project" value="UniProtKB-SubCell"/>
</dbReference>
<dbReference type="GO" id="GO:0022857">
    <property type="term" value="F:transmembrane transporter activity"/>
    <property type="evidence" value="ECO:0007669"/>
    <property type="project" value="UniProtKB-UniRule"/>
</dbReference>
<dbReference type="CDD" id="cd17320">
    <property type="entry name" value="MFS_MdfA_MDR_like"/>
    <property type="match status" value="1"/>
</dbReference>
<dbReference type="FunFam" id="1.20.1720.10:FF:000003">
    <property type="entry name" value="Multidrug resistance protein MdtL"/>
    <property type="match status" value="1"/>
</dbReference>
<dbReference type="Gene3D" id="1.20.1720.10">
    <property type="entry name" value="Multidrug resistance protein D"/>
    <property type="match status" value="1"/>
</dbReference>
<dbReference type="HAMAP" id="MF_01530">
    <property type="entry name" value="MFS_MdtL"/>
    <property type="match status" value="1"/>
</dbReference>
<dbReference type="InterPro" id="IPR011701">
    <property type="entry name" value="MFS"/>
</dbReference>
<dbReference type="InterPro" id="IPR020846">
    <property type="entry name" value="MFS_dom"/>
</dbReference>
<dbReference type="InterPro" id="IPR050189">
    <property type="entry name" value="MFS_Efflux_Transporters"/>
</dbReference>
<dbReference type="InterPro" id="IPR036259">
    <property type="entry name" value="MFS_trans_sf"/>
</dbReference>
<dbReference type="InterPro" id="IPR023697">
    <property type="entry name" value="Multidrug-R_MdtL"/>
</dbReference>
<dbReference type="NCBIfam" id="NF007782">
    <property type="entry name" value="PRK10473.1"/>
    <property type="match status" value="1"/>
</dbReference>
<dbReference type="PANTHER" id="PTHR43124:SF3">
    <property type="entry name" value="CHLORAMPHENICOL EFFLUX PUMP RV0191"/>
    <property type="match status" value="1"/>
</dbReference>
<dbReference type="PANTHER" id="PTHR43124">
    <property type="entry name" value="PURINE EFFLUX PUMP PBUE"/>
    <property type="match status" value="1"/>
</dbReference>
<dbReference type="Pfam" id="PF07690">
    <property type="entry name" value="MFS_1"/>
    <property type="match status" value="1"/>
</dbReference>
<dbReference type="SUPFAM" id="SSF103473">
    <property type="entry name" value="MFS general substrate transporter"/>
    <property type="match status" value="1"/>
</dbReference>
<dbReference type="PROSITE" id="PS50850">
    <property type="entry name" value="MFS"/>
    <property type="match status" value="1"/>
</dbReference>
<evidence type="ECO:0000255" key="1"/>
<evidence type="ECO:0000255" key="2">
    <source>
        <dbReference type="HAMAP-Rule" id="MF_01530"/>
    </source>
</evidence>
<protein>
    <recommendedName>
        <fullName evidence="2">Multidrug resistance protein MdtL</fullName>
    </recommendedName>
</protein>
<organism>
    <name type="scientific">Shewanella sp. (strain ANA-3)</name>
    <dbReference type="NCBI Taxonomy" id="94122"/>
    <lineage>
        <taxon>Bacteria</taxon>
        <taxon>Pseudomonadati</taxon>
        <taxon>Pseudomonadota</taxon>
        <taxon>Gammaproteobacteria</taxon>
        <taxon>Alteromonadales</taxon>
        <taxon>Shewanellaceae</taxon>
        <taxon>Shewanella</taxon>
    </lineage>
</organism>
<comment type="subcellular location">
    <subcellularLocation>
        <location evidence="2">Cell inner membrane</location>
        <topology evidence="2">Multi-pass membrane protein</topology>
    </subcellularLocation>
</comment>
<comment type="similarity">
    <text evidence="2">Belongs to the major facilitator superfamily. DHA1 family. MdtL (TC 2.A.1.2.22) subfamily.</text>
</comment>
<name>MDTL_SHESA</name>
<feature type="chain" id="PRO_0000282001" description="Multidrug resistance protein MdtL">
    <location>
        <begin position="1"/>
        <end position="396"/>
    </location>
</feature>
<feature type="topological domain" description="Cytoplasmic" evidence="1">
    <location>
        <begin position="1"/>
        <end position="4"/>
    </location>
</feature>
<feature type="transmembrane region" description="Helical" evidence="2">
    <location>
        <begin position="5"/>
        <end position="25"/>
    </location>
</feature>
<feature type="topological domain" description="Periplasmic" evidence="1">
    <location>
        <begin position="26"/>
        <end position="41"/>
    </location>
</feature>
<feature type="transmembrane region" description="Helical" evidence="2">
    <location>
        <begin position="42"/>
        <end position="62"/>
    </location>
</feature>
<feature type="topological domain" description="Cytoplasmic" evidence="1">
    <location>
        <begin position="63"/>
        <end position="64"/>
    </location>
</feature>
<feature type="transmembrane region" description="Helical" evidence="2">
    <location>
        <begin position="65"/>
        <end position="85"/>
    </location>
</feature>
<feature type="topological domain" description="Periplasmic" evidence="1">
    <location>
        <begin position="86"/>
        <end position="92"/>
    </location>
</feature>
<feature type="transmembrane region" description="Helical" evidence="2">
    <location>
        <begin position="93"/>
        <end position="113"/>
    </location>
</feature>
<feature type="topological domain" description="Cytoplasmic" evidence="1">
    <location>
        <begin position="114"/>
        <end position="131"/>
    </location>
</feature>
<feature type="transmembrane region" description="Helical" evidence="2">
    <location>
        <begin position="132"/>
        <end position="152"/>
    </location>
</feature>
<feature type="topological domain" description="Periplasmic" evidence="1">
    <location>
        <begin position="153"/>
        <end position="157"/>
    </location>
</feature>
<feature type="transmembrane region" description="Helical" evidence="2">
    <location>
        <begin position="158"/>
        <end position="178"/>
    </location>
</feature>
<feature type="topological domain" description="Cytoplasmic" evidence="1">
    <location>
        <begin position="179"/>
        <end position="209"/>
    </location>
</feature>
<feature type="transmembrane region" description="Helical" evidence="2">
    <location>
        <begin position="210"/>
        <end position="230"/>
    </location>
</feature>
<feature type="topological domain" description="Periplasmic" evidence="1">
    <location>
        <begin position="231"/>
        <end position="242"/>
    </location>
</feature>
<feature type="transmembrane region" description="Helical" evidence="2">
    <location>
        <begin position="243"/>
        <end position="263"/>
    </location>
</feature>
<feature type="topological domain" description="Cytoplasmic" evidence="1">
    <location>
        <begin position="264"/>
        <end position="277"/>
    </location>
</feature>
<feature type="transmembrane region" description="Helical" evidence="2">
    <location>
        <begin position="278"/>
        <end position="298"/>
    </location>
</feature>
<feature type="transmembrane region" description="Helical" evidence="2">
    <location>
        <begin position="299"/>
        <end position="319"/>
    </location>
</feature>
<feature type="topological domain" description="Cytoplasmic" evidence="1">
    <location>
        <begin position="320"/>
        <end position="333"/>
    </location>
</feature>
<feature type="transmembrane region" description="Helical" evidence="2">
    <location>
        <begin position="334"/>
        <end position="354"/>
    </location>
</feature>
<feature type="topological domain" description="Periplasmic" evidence="1">
    <location>
        <begin position="355"/>
        <end position="360"/>
    </location>
</feature>
<feature type="transmembrane region" description="Helical" evidence="2">
    <location>
        <begin position="361"/>
        <end position="381"/>
    </location>
</feature>
<feature type="topological domain" description="Cytoplasmic" evidence="1">
    <location>
        <begin position="382"/>
        <end position="396"/>
    </location>
</feature>
<gene>
    <name evidence="2" type="primary">mdtL</name>
    <name type="ordered locus">Shewana3_3587</name>
</gene>
<accession>A0L190</accession>